<organism>
    <name type="scientific">Burkholderia cenocepacia (strain ATCC BAA-245 / DSM 16553 / LMG 16656 / NCTC 13227 / J2315 / CF5610)</name>
    <name type="common">Burkholderia cepacia (strain J2315)</name>
    <dbReference type="NCBI Taxonomy" id="216591"/>
    <lineage>
        <taxon>Bacteria</taxon>
        <taxon>Pseudomonadati</taxon>
        <taxon>Pseudomonadota</taxon>
        <taxon>Betaproteobacteria</taxon>
        <taxon>Burkholderiales</taxon>
        <taxon>Burkholderiaceae</taxon>
        <taxon>Burkholderia</taxon>
        <taxon>Burkholderia cepacia complex</taxon>
    </lineage>
</organism>
<proteinExistence type="inferred from homology"/>
<keyword id="KW-0963">Cytoplasm</keyword>
<keyword id="KW-0489">Methyltransferase</keyword>
<keyword id="KW-0949">S-adenosyl-L-methionine</keyword>
<keyword id="KW-0808">Transferase</keyword>
<keyword id="KW-0819">tRNA processing</keyword>
<accession>B4EAN4</accession>
<name>TRMD_BURCJ</name>
<comment type="function">
    <text evidence="1">Specifically methylates guanosine-37 in various tRNAs.</text>
</comment>
<comment type="catalytic activity">
    <reaction evidence="1">
        <text>guanosine(37) in tRNA + S-adenosyl-L-methionine = N(1)-methylguanosine(37) in tRNA + S-adenosyl-L-homocysteine + H(+)</text>
        <dbReference type="Rhea" id="RHEA:36899"/>
        <dbReference type="Rhea" id="RHEA-COMP:10145"/>
        <dbReference type="Rhea" id="RHEA-COMP:10147"/>
        <dbReference type="ChEBI" id="CHEBI:15378"/>
        <dbReference type="ChEBI" id="CHEBI:57856"/>
        <dbReference type="ChEBI" id="CHEBI:59789"/>
        <dbReference type="ChEBI" id="CHEBI:73542"/>
        <dbReference type="ChEBI" id="CHEBI:74269"/>
        <dbReference type="EC" id="2.1.1.228"/>
    </reaction>
</comment>
<comment type="subunit">
    <text evidence="1">Homodimer.</text>
</comment>
<comment type="subcellular location">
    <subcellularLocation>
        <location evidence="1">Cytoplasm</location>
    </subcellularLocation>
</comment>
<comment type="similarity">
    <text evidence="1">Belongs to the RNA methyltransferase TrmD family.</text>
</comment>
<feature type="chain" id="PRO_1000130143" description="tRNA (guanine-N(1)-)-methyltransferase">
    <location>
        <begin position="1"/>
        <end position="264"/>
    </location>
</feature>
<feature type="binding site" evidence="1">
    <location>
        <position position="125"/>
    </location>
    <ligand>
        <name>S-adenosyl-L-methionine</name>
        <dbReference type="ChEBI" id="CHEBI:59789"/>
    </ligand>
</feature>
<feature type="binding site" evidence="1">
    <location>
        <begin position="145"/>
        <end position="150"/>
    </location>
    <ligand>
        <name>S-adenosyl-L-methionine</name>
        <dbReference type="ChEBI" id="CHEBI:59789"/>
    </ligand>
</feature>
<sequence>MNQVTESAVQFDVITLFPEMFRALTDWGITSRAVKQGRFGLRTWNPRDFTTDNYRTVDDRPYGGGPGMVMLARPLEAAIDAAKAAQAEQGIASTRVVMMSPQGAPLTHDRAVRMAQEPGVVVLCGRYEAIDQRLLDRCVDEEISLGDFVLSGGELPAMAMMDAVVRLLPGVLNDSLSAVQDSFADGLLDCPHYTRPEEYDGVRVPDVLLGGHHAEIEKWRRQEALRNTLRKRPDLIVRARREKLLSRADEAWLANLAREAKDAS</sequence>
<dbReference type="EC" id="2.1.1.228" evidence="1"/>
<dbReference type="EMBL" id="AM747720">
    <property type="protein sequence ID" value="CAR53225.1"/>
    <property type="molecule type" value="Genomic_DNA"/>
</dbReference>
<dbReference type="RefSeq" id="WP_006486979.1">
    <property type="nucleotide sequence ID" value="NC_011000.1"/>
</dbReference>
<dbReference type="SMR" id="B4EAN4"/>
<dbReference type="GeneID" id="56557516"/>
<dbReference type="KEGG" id="bcj:BCAL2926"/>
<dbReference type="eggNOG" id="COG0336">
    <property type="taxonomic scope" value="Bacteria"/>
</dbReference>
<dbReference type="HOGENOM" id="CLU_047363_0_2_4"/>
<dbReference type="BioCyc" id="BCEN216591:G1G1V-3235-MONOMER"/>
<dbReference type="Proteomes" id="UP000001035">
    <property type="component" value="Chromosome 1"/>
</dbReference>
<dbReference type="GO" id="GO:0005829">
    <property type="term" value="C:cytosol"/>
    <property type="evidence" value="ECO:0007669"/>
    <property type="project" value="TreeGrafter"/>
</dbReference>
<dbReference type="GO" id="GO:0052906">
    <property type="term" value="F:tRNA (guanine(37)-N1)-methyltransferase activity"/>
    <property type="evidence" value="ECO:0007669"/>
    <property type="project" value="UniProtKB-UniRule"/>
</dbReference>
<dbReference type="GO" id="GO:0002939">
    <property type="term" value="P:tRNA N1-guanine methylation"/>
    <property type="evidence" value="ECO:0007669"/>
    <property type="project" value="TreeGrafter"/>
</dbReference>
<dbReference type="CDD" id="cd18080">
    <property type="entry name" value="TrmD-like"/>
    <property type="match status" value="1"/>
</dbReference>
<dbReference type="FunFam" id="1.10.1270.20:FF:000001">
    <property type="entry name" value="tRNA (guanine-N(1)-)-methyltransferase"/>
    <property type="match status" value="1"/>
</dbReference>
<dbReference type="FunFam" id="3.40.1280.10:FF:000001">
    <property type="entry name" value="tRNA (guanine-N(1)-)-methyltransferase"/>
    <property type="match status" value="1"/>
</dbReference>
<dbReference type="Gene3D" id="3.40.1280.10">
    <property type="match status" value="1"/>
</dbReference>
<dbReference type="Gene3D" id="1.10.1270.20">
    <property type="entry name" value="tRNA(m1g37)methyltransferase, domain 2"/>
    <property type="match status" value="1"/>
</dbReference>
<dbReference type="HAMAP" id="MF_00605">
    <property type="entry name" value="TrmD"/>
    <property type="match status" value="1"/>
</dbReference>
<dbReference type="InterPro" id="IPR029028">
    <property type="entry name" value="Alpha/beta_knot_MTases"/>
</dbReference>
<dbReference type="InterPro" id="IPR023148">
    <property type="entry name" value="tRNA_m1G_MeTrfase_C_sf"/>
</dbReference>
<dbReference type="InterPro" id="IPR002649">
    <property type="entry name" value="tRNA_m1G_MeTrfase_TrmD"/>
</dbReference>
<dbReference type="InterPro" id="IPR029026">
    <property type="entry name" value="tRNA_m1G_MTases_N"/>
</dbReference>
<dbReference type="InterPro" id="IPR016009">
    <property type="entry name" value="tRNA_MeTrfase_TRMD/TRM10"/>
</dbReference>
<dbReference type="NCBIfam" id="NF000648">
    <property type="entry name" value="PRK00026.1"/>
    <property type="match status" value="1"/>
</dbReference>
<dbReference type="NCBIfam" id="TIGR00088">
    <property type="entry name" value="trmD"/>
    <property type="match status" value="1"/>
</dbReference>
<dbReference type="PANTHER" id="PTHR46417">
    <property type="entry name" value="TRNA (GUANINE-N(1)-)-METHYLTRANSFERASE"/>
    <property type="match status" value="1"/>
</dbReference>
<dbReference type="PANTHER" id="PTHR46417:SF1">
    <property type="entry name" value="TRNA (GUANINE-N(1)-)-METHYLTRANSFERASE"/>
    <property type="match status" value="1"/>
</dbReference>
<dbReference type="Pfam" id="PF01746">
    <property type="entry name" value="tRNA_m1G_MT"/>
    <property type="match status" value="1"/>
</dbReference>
<dbReference type="PIRSF" id="PIRSF000386">
    <property type="entry name" value="tRNA_mtase"/>
    <property type="match status" value="1"/>
</dbReference>
<dbReference type="SUPFAM" id="SSF75217">
    <property type="entry name" value="alpha/beta knot"/>
    <property type="match status" value="1"/>
</dbReference>
<protein>
    <recommendedName>
        <fullName evidence="1">tRNA (guanine-N(1)-)-methyltransferase</fullName>
        <ecNumber evidence="1">2.1.1.228</ecNumber>
    </recommendedName>
    <alternativeName>
        <fullName evidence="1">M1G-methyltransferase</fullName>
    </alternativeName>
    <alternativeName>
        <fullName evidence="1">tRNA [GM37] methyltransferase</fullName>
    </alternativeName>
</protein>
<evidence type="ECO:0000255" key="1">
    <source>
        <dbReference type="HAMAP-Rule" id="MF_00605"/>
    </source>
</evidence>
<reference key="1">
    <citation type="journal article" date="2009" name="J. Bacteriol.">
        <title>The genome of Burkholderia cenocepacia J2315, an epidemic pathogen of cystic fibrosis patients.</title>
        <authorList>
            <person name="Holden M.T."/>
            <person name="Seth-Smith H.M."/>
            <person name="Crossman L.C."/>
            <person name="Sebaihia M."/>
            <person name="Bentley S.D."/>
            <person name="Cerdeno-Tarraga A.M."/>
            <person name="Thomson N.R."/>
            <person name="Bason N."/>
            <person name="Quail M.A."/>
            <person name="Sharp S."/>
            <person name="Cherevach I."/>
            <person name="Churcher C."/>
            <person name="Goodhead I."/>
            <person name="Hauser H."/>
            <person name="Holroyd N."/>
            <person name="Mungall K."/>
            <person name="Scott P."/>
            <person name="Walker D."/>
            <person name="White B."/>
            <person name="Rose H."/>
            <person name="Iversen P."/>
            <person name="Mil-Homens D."/>
            <person name="Rocha E.P."/>
            <person name="Fialho A.M."/>
            <person name="Baldwin A."/>
            <person name="Dowson C."/>
            <person name="Barrell B.G."/>
            <person name="Govan J.R."/>
            <person name="Vandamme P."/>
            <person name="Hart C.A."/>
            <person name="Mahenthiralingam E."/>
            <person name="Parkhill J."/>
        </authorList>
    </citation>
    <scope>NUCLEOTIDE SEQUENCE [LARGE SCALE GENOMIC DNA]</scope>
    <source>
        <strain>ATCC BAA-245 / DSM 16553 / LMG 16656 / NCTC 13227 / J2315 / CF5610</strain>
    </source>
</reference>
<gene>
    <name evidence="1" type="primary">trmD</name>
    <name type="ordered locus">BceJ2315_28620</name>
    <name type="ORF">BCAL2926</name>
</gene>